<reference key="1">
    <citation type="journal article" date="2007" name="PLoS Genet.">
        <title>Patterns and implications of gene gain and loss in the evolution of Prochlorococcus.</title>
        <authorList>
            <person name="Kettler G.C."/>
            <person name="Martiny A.C."/>
            <person name="Huang K."/>
            <person name="Zucker J."/>
            <person name="Coleman M.L."/>
            <person name="Rodrigue S."/>
            <person name="Chen F."/>
            <person name="Lapidus A."/>
            <person name="Ferriera S."/>
            <person name="Johnson J."/>
            <person name="Steglich C."/>
            <person name="Church G.M."/>
            <person name="Richardson P."/>
            <person name="Chisholm S.W."/>
        </authorList>
    </citation>
    <scope>NUCLEOTIDE SEQUENCE [LARGE SCALE GENOMIC DNA]</scope>
    <source>
        <strain>MIT 9215</strain>
    </source>
</reference>
<comment type="function">
    <text evidence="1">Binds to the 23S rRNA.</text>
</comment>
<comment type="subunit">
    <text evidence="1">Part of the 50S ribosomal subunit.</text>
</comment>
<comment type="similarity">
    <text evidence="1">Belongs to the universal ribosomal protein uL15 family.</text>
</comment>
<accession>A8G744</accession>
<dbReference type="EMBL" id="CP000825">
    <property type="protein sequence ID" value="ABV51425.1"/>
    <property type="molecule type" value="Genomic_DNA"/>
</dbReference>
<dbReference type="RefSeq" id="WP_012008435.1">
    <property type="nucleotide sequence ID" value="NC_009840.1"/>
</dbReference>
<dbReference type="SMR" id="A8G744"/>
<dbReference type="STRING" id="93060.P9215_18121"/>
<dbReference type="KEGG" id="pmh:P9215_18121"/>
<dbReference type="eggNOG" id="COG0200">
    <property type="taxonomic scope" value="Bacteria"/>
</dbReference>
<dbReference type="HOGENOM" id="CLU_055188_4_1_3"/>
<dbReference type="OrthoDB" id="9810293at2"/>
<dbReference type="Proteomes" id="UP000002014">
    <property type="component" value="Chromosome"/>
</dbReference>
<dbReference type="GO" id="GO:0022625">
    <property type="term" value="C:cytosolic large ribosomal subunit"/>
    <property type="evidence" value="ECO:0007669"/>
    <property type="project" value="TreeGrafter"/>
</dbReference>
<dbReference type="GO" id="GO:0019843">
    <property type="term" value="F:rRNA binding"/>
    <property type="evidence" value="ECO:0007669"/>
    <property type="project" value="UniProtKB-UniRule"/>
</dbReference>
<dbReference type="GO" id="GO:0003735">
    <property type="term" value="F:structural constituent of ribosome"/>
    <property type="evidence" value="ECO:0007669"/>
    <property type="project" value="InterPro"/>
</dbReference>
<dbReference type="GO" id="GO:0006412">
    <property type="term" value="P:translation"/>
    <property type="evidence" value="ECO:0007669"/>
    <property type="project" value="UniProtKB-UniRule"/>
</dbReference>
<dbReference type="Gene3D" id="3.100.10.10">
    <property type="match status" value="1"/>
</dbReference>
<dbReference type="HAMAP" id="MF_01341">
    <property type="entry name" value="Ribosomal_uL15"/>
    <property type="match status" value="1"/>
</dbReference>
<dbReference type="InterPro" id="IPR030878">
    <property type="entry name" value="Ribosomal_uL15"/>
</dbReference>
<dbReference type="InterPro" id="IPR021131">
    <property type="entry name" value="Ribosomal_uL15/eL18"/>
</dbReference>
<dbReference type="InterPro" id="IPR036227">
    <property type="entry name" value="Ribosomal_uL15/eL18_sf"/>
</dbReference>
<dbReference type="InterPro" id="IPR005749">
    <property type="entry name" value="Ribosomal_uL15_bac-type"/>
</dbReference>
<dbReference type="InterPro" id="IPR001196">
    <property type="entry name" value="Ribosomal_uL15_CS"/>
</dbReference>
<dbReference type="NCBIfam" id="TIGR01071">
    <property type="entry name" value="rplO_bact"/>
    <property type="match status" value="1"/>
</dbReference>
<dbReference type="PANTHER" id="PTHR12934">
    <property type="entry name" value="50S RIBOSOMAL PROTEIN L15"/>
    <property type="match status" value="1"/>
</dbReference>
<dbReference type="PANTHER" id="PTHR12934:SF11">
    <property type="entry name" value="LARGE RIBOSOMAL SUBUNIT PROTEIN UL15M"/>
    <property type="match status" value="1"/>
</dbReference>
<dbReference type="Pfam" id="PF00828">
    <property type="entry name" value="Ribosomal_L27A"/>
    <property type="match status" value="1"/>
</dbReference>
<dbReference type="SUPFAM" id="SSF52080">
    <property type="entry name" value="Ribosomal proteins L15p and L18e"/>
    <property type="match status" value="1"/>
</dbReference>
<dbReference type="PROSITE" id="PS00475">
    <property type="entry name" value="RIBOSOMAL_L15"/>
    <property type="match status" value="1"/>
</dbReference>
<evidence type="ECO:0000255" key="1">
    <source>
        <dbReference type="HAMAP-Rule" id="MF_01341"/>
    </source>
</evidence>
<evidence type="ECO:0000256" key="2">
    <source>
        <dbReference type="SAM" id="MobiDB-lite"/>
    </source>
</evidence>
<evidence type="ECO:0000305" key="3"/>
<gene>
    <name evidence="1" type="primary">rplO</name>
    <name type="ordered locus">P9215_18121</name>
</gene>
<sequence length="152" mass="16740">MTSTLNTLKSNSGSRKKKLRKGRGIAAGQGASCGFGMRGQKSRSGRPTRPGFEGGQMPLYRRVPKLKHFEIINQKNFSIINLEKLNDFKDNDTVNIDSLVKKGLIFKPKFPLKILGNGKINVKLKVQAHAFTKVAKQKIEAAGGSCELINNK</sequence>
<organism>
    <name type="scientific">Prochlorococcus marinus (strain MIT 9215)</name>
    <dbReference type="NCBI Taxonomy" id="93060"/>
    <lineage>
        <taxon>Bacteria</taxon>
        <taxon>Bacillati</taxon>
        <taxon>Cyanobacteriota</taxon>
        <taxon>Cyanophyceae</taxon>
        <taxon>Synechococcales</taxon>
        <taxon>Prochlorococcaceae</taxon>
        <taxon>Prochlorococcus</taxon>
    </lineage>
</organism>
<proteinExistence type="inferred from homology"/>
<name>RL15_PROM2</name>
<keyword id="KW-0687">Ribonucleoprotein</keyword>
<keyword id="KW-0689">Ribosomal protein</keyword>
<keyword id="KW-0694">RNA-binding</keyword>
<keyword id="KW-0699">rRNA-binding</keyword>
<feature type="chain" id="PRO_1000067667" description="Large ribosomal subunit protein uL15">
    <location>
        <begin position="1"/>
        <end position="152"/>
    </location>
</feature>
<feature type="region of interest" description="Disordered" evidence="2">
    <location>
        <begin position="1"/>
        <end position="57"/>
    </location>
</feature>
<feature type="compositionally biased region" description="Basic residues" evidence="2">
    <location>
        <begin position="14"/>
        <end position="23"/>
    </location>
</feature>
<feature type="compositionally biased region" description="Gly residues" evidence="2">
    <location>
        <begin position="25"/>
        <end position="37"/>
    </location>
</feature>
<protein>
    <recommendedName>
        <fullName evidence="1">Large ribosomal subunit protein uL15</fullName>
    </recommendedName>
    <alternativeName>
        <fullName evidence="3">50S ribosomal protein L15</fullName>
    </alternativeName>
</protein>